<protein>
    <recommendedName>
        <fullName>L-amino oxidase</fullName>
        <shortName evidence="4">CP-LAAO</shortName>
        <shortName>LAO</shortName>
        <ecNumber evidence="3">1.4.3.2</ecNumber>
    </recommendedName>
</protein>
<reference key="1">
    <citation type="journal article" date="2018" name="Molecules">
        <title>Cytotoxic, anti-proliferative and apoptosis activity of L-amino acid oxidase from malaysian Cryptelytrops purpureomaculatus (CP-LAAO) venom on human colon cancer cells.</title>
        <authorList>
            <person name="Zainal Abidin S.A."/>
            <person name="Rajadurai P."/>
            <person name="Hoque Chowdhury M.E."/>
            <person name="Othman I."/>
            <person name="Naidu R."/>
        </authorList>
    </citation>
    <scope>PROTEIN SEQUENCE</scope>
    <scope>FUNCTION</scope>
    <scope>IDENTIFICATION BY MASS SPECTROMETRY</scope>
    <scope>CATALYTIC ACTIVITY</scope>
    <scope>BIOPHYSICOCHEMICAL PROPERTIES</scope>
    <scope>SUBCELLULAR LOCATION</scope>
    <scope>SUBUNIT</scope>
    <source>
        <tissue>Venom</tissue>
    </source>
</reference>
<dbReference type="EC" id="1.4.3.2" evidence="3"/>
<dbReference type="SABIO-RK" id="P0DPS2"/>
<dbReference type="GO" id="GO:0005576">
    <property type="term" value="C:extracellular region"/>
    <property type="evidence" value="ECO:0007669"/>
    <property type="project" value="UniProtKB-SubCell"/>
</dbReference>
<dbReference type="GO" id="GO:0001716">
    <property type="term" value="F:L-amino-acid oxidase activity"/>
    <property type="evidence" value="ECO:0007669"/>
    <property type="project" value="UniProtKB-EC"/>
</dbReference>
<dbReference type="GO" id="GO:0009063">
    <property type="term" value="P:amino acid catabolic process"/>
    <property type="evidence" value="ECO:0007669"/>
    <property type="project" value="TreeGrafter"/>
</dbReference>
<dbReference type="GO" id="GO:0006915">
    <property type="term" value="P:apoptotic process"/>
    <property type="evidence" value="ECO:0007669"/>
    <property type="project" value="UniProtKB-KW"/>
</dbReference>
<dbReference type="GO" id="GO:0042742">
    <property type="term" value="P:defense response to bacterium"/>
    <property type="evidence" value="ECO:0007669"/>
    <property type="project" value="UniProtKB-KW"/>
</dbReference>
<dbReference type="GO" id="GO:0031640">
    <property type="term" value="P:killing of cells of another organism"/>
    <property type="evidence" value="ECO:0007669"/>
    <property type="project" value="UniProtKB-KW"/>
</dbReference>
<dbReference type="Gene3D" id="3.90.660.10">
    <property type="match status" value="3"/>
</dbReference>
<dbReference type="Gene3D" id="1.10.405.10">
    <property type="entry name" value="Guanine Nucleotide Dissociation Inhibitor, domain 1"/>
    <property type="match status" value="1"/>
</dbReference>
<dbReference type="InterPro" id="IPR002937">
    <property type="entry name" value="Amino_oxidase"/>
</dbReference>
<dbReference type="InterPro" id="IPR036188">
    <property type="entry name" value="FAD/NAD-bd_sf"/>
</dbReference>
<dbReference type="InterPro" id="IPR050281">
    <property type="entry name" value="Flavin_monoamine_oxidase"/>
</dbReference>
<dbReference type="PANTHER" id="PTHR10742:SF355">
    <property type="entry name" value="AMINE OXIDASE"/>
    <property type="match status" value="1"/>
</dbReference>
<dbReference type="PANTHER" id="PTHR10742">
    <property type="entry name" value="FLAVIN MONOAMINE OXIDASE"/>
    <property type="match status" value="1"/>
</dbReference>
<dbReference type="Pfam" id="PF01593">
    <property type="entry name" value="Amino_oxidase"/>
    <property type="match status" value="2"/>
</dbReference>
<dbReference type="SUPFAM" id="SSF54373">
    <property type="entry name" value="FAD-linked reductases, C-terminal domain"/>
    <property type="match status" value="1"/>
</dbReference>
<dbReference type="SUPFAM" id="SSF51905">
    <property type="entry name" value="FAD/NAD(P)-binding domain"/>
    <property type="match status" value="1"/>
</dbReference>
<sequence length="488" mass="54544">MNVFFMFSLLFLAALGSCADDRNPLEECFRETDYEEFLEIARXXXXTSNPKHVVRVGAGMSGLSAAYVLAGAGHQVTVLEASERPGGRXXXXXXXXEGWYANLGPMRXXXXXXXXXXXXXKFGLNLNEFSQENDNAWYFIKXXXXXXXXXXDPGLLKYPVKPSEAGKSAGQLYEESLGKXXXXXXXXXXXXXXXXXXXXXXXXXXXXXXXXXXXXXXXXXXXXXXXXXXXXXXXXXXXXXXXXXXXXXFDEIVDGMDKLPTSMYQAIXXXXXXXXXXXXXXXXXXKVTVTYQTPAKXXXXXXXXXXXXXXXXXXXXXXXXXXXXXXXXXXXXXXXXXXXXXXIFLTCTKKFWEDDGIHGGKSTTDLPSRXXXXXXXXXXXXXXVIIAYGIGDDANFFQALDFKDCADIVFNDLSLIHQLPKEEIPSFCYPSMIQKXXXXXXXXXXITTFFTPYQFQHFSEAXXXXXXXIYFAGEYTAQAHGWIDSTIK</sequence>
<feature type="chain" id="PRO_0000446020" description="L-amino oxidase" evidence="3">
    <location>
        <begin position="1"/>
        <end position="488" status="greater than"/>
    </location>
</feature>
<feature type="binding site" evidence="2">
    <location>
        <begin position="60"/>
        <end position="61"/>
    </location>
    <ligand>
        <name>FAD</name>
        <dbReference type="ChEBI" id="CHEBI:57692"/>
    </ligand>
</feature>
<feature type="binding site" evidence="2">
    <location>
        <begin position="80"/>
        <end position="81"/>
    </location>
    <ligand>
        <name>FAD</name>
        <dbReference type="ChEBI" id="CHEBI:57692"/>
    </ligand>
</feature>
<feature type="binding site" evidence="2">
    <location>
        <position position="88"/>
    </location>
    <ligand>
        <name>FAD</name>
        <dbReference type="ChEBI" id="CHEBI:57692"/>
    </ligand>
</feature>
<feature type="binding site" evidence="2">
    <location>
        <begin position="104"/>
        <end position="107"/>
    </location>
    <ligand>
        <name>FAD</name>
        <dbReference type="ChEBI" id="CHEBI:57692"/>
    </ligand>
</feature>
<feature type="binding site" evidence="2">
    <location>
        <position position="107"/>
    </location>
    <ligand>
        <name>substrate</name>
    </ligand>
</feature>
<feature type="binding site" evidence="2">
    <location>
        <position position="388"/>
    </location>
    <ligand>
        <name>substrate</name>
    </ligand>
</feature>
<feature type="binding site" evidence="2">
    <location>
        <position position="474"/>
    </location>
    <ligand>
        <name>FAD</name>
        <dbReference type="ChEBI" id="CHEBI:57692"/>
    </ligand>
</feature>
<feature type="binding site" evidence="2">
    <location>
        <begin position="481"/>
        <end position="486"/>
    </location>
    <ligand>
        <name>FAD</name>
        <dbReference type="ChEBI" id="CHEBI:57692"/>
    </ligand>
</feature>
<feature type="binding site" evidence="2">
    <location>
        <begin position="481"/>
        <end position="482"/>
    </location>
    <ligand>
        <name>substrate</name>
    </ligand>
</feature>
<feature type="disulfide bond" evidence="2">
    <location>
        <begin position="347"/>
        <end position="428"/>
    </location>
</feature>
<feature type="non-terminal residue" evidence="4">
    <location>
        <position position="488"/>
    </location>
</feature>
<proteinExistence type="evidence at protein level"/>
<comment type="function">
    <text evidence="1 3">Catalyzes an oxidative deamination of predominantly hydrophobic and aromatic L-amino acids, thus producing hydrogen peroxide that may contribute to the diverse toxic effects of this enzyme (PubMed:29890640). Shows activity on L-Leu (PubMed:29890640). Exhibits diverse biological activities, such as hemorrhage, hemolysis, edema, antibacterial and antiparasitic activities, as well as regulation of platelet aggregation (By similarity). When tested on SW480 and SW620 human colon cancer cells, shows inhibition of cell proliferation, and induction of apoptosis, which is probably a consequence of the increased caspase-3 activity and the decreased Bcl-2 expression (PubMed:29890640).</text>
</comment>
<comment type="catalytic activity">
    <reaction evidence="3">
        <text>an L-alpha-amino acid + O2 + H2O = a 2-oxocarboxylate + H2O2 + NH4(+)</text>
        <dbReference type="Rhea" id="RHEA:13781"/>
        <dbReference type="ChEBI" id="CHEBI:15377"/>
        <dbReference type="ChEBI" id="CHEBI:15379"/>
        <dbReference type="ChEBI" id="CHEBI:16240"/>
        <dbReference type="ChEBI" id="CHEBI:28938"/>
        <dbReference type="ChEBI" id="CHEBI:35179"/>
        <dbReference type="ChEBI" id="CHEBI:59869"/>
        <dbReference type="EC" id="1.4.3.2"/>
    </reaction>
    <physiologicalReaction direction="left-to-right" evidence="3">
        <dbReference type="Rhea" id="RHEA:13782"/>
    </physiologicalReaction>
</comment>
<comment type="catalytic activity">
    <reaction evidence="3">
        <text>L-leucine + O2 + H2O = 4-methyl-2-oxopentanoate + H2O2 + NH4(+)</text>
        <dbReference type="Rhea" id="RHEA:60996"/>
        <dbReference type="ChEBI" id="CHEBI:15377"/>
        <dbReference type="ChEBI" id="CHEBI:15379"/>
        <dbReference type="ChEBI" id="CHEBI:16240"/>
        <dbReference type="ChEBI" id="CHEBI:17865"/>
        <dbReference type="ChEBI" id="CHEBI:28938"/>
        <dbReference type="ChEBI" id="CHEBI:57427"/>
    </reaction>
</comment>
<comment type="cofactor">
    <cofactor evidence="2">
        <name>FAD</name>
        <dbReference type="ChEBI" id="CHEBI:57692"/>
    </cofactor>
</comment>
<comment type="biophysicochemical properties">
    <kinetics>
        <KM evidence="3">4.376 mM for L-leucine</KM>
    </kinetics>
</comment>
<comment type="subunit">
    <text evidence="3">Monomer. This is in contrast with most of its orthologs, that are non-covalently linked homodimers.</text>
</comment>
<comment type="subcellular location">
    <subcellularLocation>
        <location evidence="3">Secreted</location>
    </subcellularLocation>
</comment>
<comment type="tissue specificity">
    <text evidence="6">Expressed by the venom gland.</text>
</comment>
<comment type="PTM">
    <text evidence="2">N-glycosylated.</text>
</comment>
<comment type="similarity">
    <text evidence="5">Belongs to the flavin monoamine oxidase family. FIG1 subfamily.</text>
</comment>
<evidence type="ECO:0000250" key="1">
    <source>
        <dbReference type="UniProtKB" id="P0CC17"/>
    </source>
</evidence>
<evidence type="ECO:0000250" key="2">
    <source>
        <dbReference type="UniProtKB" id="P81382"/>
    </source>
</evidence>
<evidence type="ECO:0000269" key="3">
    <source>
    </source>
</evidence>
<evidence type="ECO:0000303" key="4">
    <source>
    </source>
</evidence>
<evidence type="ECO:0000305" key="5"/>
<evidence type="ECO:0000305" key="6">
    <source>
    </source>
</evidence>
<name>OXLA_TRIPP</name>
<keyword id="KW-0044">Antibiotic</keyword>
<keyword id="KW-0929">Antimicrobial</keyword>
<keyword id="KW-0053">Apoptosis</keyword>
<keyword id="KW-0204">Cytolysis</keyword>
<keyword id="KW-0903">Direct protein sequencing</keyword>
<keyword id="KW-1015">Disulfide bond</keyword>
<keyword id="KW-0274">FAD</keyword>
<keyword id="KW-0285">Flavoprotein</keyword>
<keyword id="KW-0325">Glycoprotein</keyword>
<keyword id="KW-0560">Oxidoreductase</keyword>
<keyword id="KW-0964">Secreted</keyword>
<accession>P0DPS2</accession>
<organism>
    <name type="scientific">Trimeresurus purpureomaculatus</name>
    <name type="common">Mangrove pit viper</name>
    <name type="synonym">Cryptelytrops purpureomaculatus</name>
    <dbReference type="NCBI Taxonomy" id="101163"/>
    <lineage>
        <taxon>Eukaryota</taxon>
        <taxon>Metazoa</taxon>
        <taxon>Chordata</taxon>
        <taxon>Craniata</taxon>
        <taxon>Vertebrata</taxon>
        <taxon>Euteleostomi</taxon>
        <taxon>Lepidosauria</taxon>
        <taxon>Squamata</taxon>
        <taxon>Bifurcata</taxon>
        <taxon>Unidentata</taxon>
        <taxon>Episquamata</taxon>
        <taxon>Toxicofera</taxon>
        <taxon>Serpentes</taxon>
        <taxon>Colubroidea</taxon>
        <taxon>Viperidae</taxon>
        <taxon>Crotalinae</taxon>
        <taxon>Trimeresurus</taxon>
    </lineage>
</organism>